<reference key="1">
    <citation type="journal article" date="2005" name="Nature">
        <title>The genome of the social amoeba Dictyostelium discoideum.</title>
        <authorList>
            <person name="Eichinger L."/>
            <person name="Pachebat J.A."/>
            <person name="Gloeckner G."/>
            <person name="Rajandream M.A."/>
            <person name="Sucgang R."/>
            <person name="Berriman M."/>
            <person name="Song J."/>
            <person name="Olsen R."/>
            <person name="Szafranski K."/>
            <person name="Xu Q."/>
            <person name="Tunggal B."/>
            <person name="Kummerfeld S."/>
            <person name="Madera M."/>
            <person name="Konfortov B.A."/>
            <person name="Rivero F."/>
            <person name="Bankier A.T."/>
            <person name="Lehmann R."/>
            <person name="Hamlin N."/>
            <person name="Davies R."/>
            <person name="Gaudet P."/>
            <person name="Fey P."/>
            <person name="Pilcher K."/>
            <person name="Chen G."/>
            <person name="Saunders D."/>
            <person name="Sodergren E.J."/>
            <person name="Davis P."/>
            <person name="Kerhornou A."/>
            <person name="Nie X."/>
            <person name="Hall N."/>
            <person name="Anjard C."/>
            <person name="Hemphill L."/>
            <person name="Bason N."/>
            <person name="Farbrother P."/>
            <person name="Desany B."/>
            <person name="Just E."/>
            <person name="Morio T."/>
            <person name="Rost R."/>
            <person name="Churcher C.M."/>
            <person name="Cooper J."/>
            <person name="Haydock S."/>
            <person name="van Driessche N."/>
            <person name="Cronin A."/>
            <person name="Goodhead I."/>
            <person name="Muzny D.M."/>
            <person name="Mourier T."/>
            <person name="Pain A."/>
            <person name="Lu M."/>
            <person name="Harper D."/>
            <person name="Lindsay R."/>
            <person name="Hauser H."/>
            <person name="James K.D."/>
            <person name="Quiles M."/>
            <person name="Madan Babu M."/>
            <person name="Saito T."/>
            <person name="Buchrieser C."/>
            <person name="Wardroper A."/>
            <person name="Felder M."/>
            <person name="Thangavelu M."/>
            <person name="Johnson D."/>
            <person name="Knights A."/>
            <person name="Loulseged H."/>
            <person name="Mungall K.L."/>
            <person name="Oliver K."/>
            <person name="Price C."/>
            <person name="Quail M.A."/>
            <person name="Urushihara H."/>
            <person name="Hernandez J."/>
            <person name="Rabbinowitsch E."/>
            <person name="Steffen D."/>
            <person name="Sanders M."/>
            <person name="Ma J."/>
            <person name="Kohara Y."/>
            <person name="Sharp S."/>
            <person name="Simmonds M.N."/>
            <person name="Spiegler S."/>
            <person name="Tivey A."/>
            <person name="Sugano S."/>
            <person name="White B."/>
            <person name="Walker D."/>
            <person name="Woodward J.R."/>
            <person name="Winckler T."/>
            <person name="Tanaka Y."/>
            <person name="Shaulsky G."/>
            <person name="Schleicher M."/>
            <person name="Weinstock G.M."/>
            <person name="Rosenthal A."/>
            <person name="Cox E.C."/>
            <person name="Chisholm R.L."/>
            <person name="Gibbs R.A."/>
            <person name="Loomis W.F."/>
            <person name="Platzer M."/>
            <person name="Kay R.R."/>
            <person name="Williams J.G."/>
            <person name="Dear P.H."/>
            <person name="Noegel A.A."/>
            <person name="Barrell B.G."/>
            <person name="Kuspa A."/>
        </authorList>
    </citation>
    <scope>NUCLEOTIDE SEQUENCE [LARGE SCALE GENOMIC DNA]</scope>
    <source>
        <strain>AX4</strain>
    </source>
</reference>
<dbReference type="EMBL" id="AAFI02000070">
    <property type="protein sequence ID" value="EAL65127.1"/>
    <property type="molecule type" value="Genomic_DNA"/>
</dbReference>
<dbReference type="RefSeq" id="XP_638429.1">
    <property type="nucleotide sequence ID" value="XM_633337.1"/>
</dbReference>
<dbReference type="PaxDb" id="44689-DDB0218624"/>
<dbReference type="EnsemblProtists" id="EAL65127">
    <property type="protein sequence ID" value="EAL65127"/>
    <property type="gene ID" value="DDB_G0284715"/>
</dbReference>
<dbReference type="GeneID" id="8624678"/>
<dbReference type="KEGG" id="ddi:DDB_G0284715"/>
<dbReference type="HOGENOM" id="CLU_2188922_0_0_1"/>
<dbReference type="InParanoid" id="Q54PE6"/>
<dbReference type="OMA" id="WVIHLAK"/>
<dbReference type="PRO" id="PR:Q54PE6"/>
<dbReference type="Proteomes" id="UP000002195">
    <property type="component" value="Chromosome 4"/>
</dbReference>
<proteinExistence type="predicted"/>
<protein>
    <recommendedName>
        <fullName>Putative uncharacterized protein DDB_G0284715</fullName>
    </recommendedName>
</protein>
<evidence type="ECO:0000256" key="1">
    <source>
        <dbReference type="SAM" id="MobiDB-lite"/>
    </source>
</evidence>
<accession>Q54PE6</accession>
<organism>
    <name type="scientific">Dictyostelium discoideum</name>
    <name type="common">Social amoeba</name>
    <dbReference type="NCBI Taxonomy" id="44689"/>
    <lineage>
        <taxon>Eukaryota</taxon>
        <taxon>Amoebozoa</taxon>
        <taxon>Evosea</taxon>
        <taxon>Eumycetozoa</taxon>
        <taxon>Dictyostelia</taxon>
        <taxon>Dictyosteliales</taxon>
        <taxon>Dictyosteliaceae</taxon>
        <taxon>Dictyostelium</taxon>
    </lineage>
</organism>
<sequence length="109" mass="12705">MKHFAKVSSKNIWVIHLAKVKYNIDNDSSFFSVQCNSSNNLNNNNFNENNLKNNNNRNGNNNNNNNNNNNNNNNNNNNNNNNNNNNNNKKNDLTDTINQKKKKKKRRVK</sequence>
<keyword id="KW-1185">Reference proteome</keyword>
<name>Y8624_DICDI</name>
<feature type="chain" id="PRO_0000350918" description="Putative uncharacterized protein DDB_G0284715">
    <location>
        <begin position="1"/>
        <end position="109"/>
    </location>
</feature>
<feature type="region of interest" description="Disordered" evidence="1">
    <location>
        <begin position="36"/>
        <end position="109"/>
    </location>
</feature>
<feature type="compositionally biased region" description="Low complexity" evidence="1">
    <location>
        <begin position="39"/>
        <end position="88"/>
    </location>
</feature>
<feature type="compositionally biased region" description="Basic residues" evidence="1">
    <location>
        <begin position="99"/>
        <end position="109"/>
    </location>
</feature>
<gene>
    <name type="ORF">DDB_G0284715</name>
</gene>